<comment type="function">
    <text evidence="2 6 7 8 11">Mediates both low-affinity uptake and efflux of sugar across the plasma membrane. Required for pollen viability. Involved in the transport of copper, in cooperation with COPT1 and COPT2 (PubMed:16648463, PubMed:20852017, PubMed:21107422, PubMed:25988582).</text>
</comment>
<comment type="function">
    <text evidence="2 3 4 7 9 11">Confers sensitivity to bacterial blight mediated by X.oryzae pv. oryzae (Xoo) in its Xa13 allelic form (e.g. cv. IR24), probably by providing the sugar required for the pathogen growth, or by reducing copper contents in xylem. However, a recessive resistance can be associated with the xa13 allele (in which the promoter is mutated leading to reduced induction upon pathogen infection, e.g. cv. IRBB13), specifically toward Xoo Philippine race 6 and Indian race PXO8.</text>
</comment>
<comment type="subunit">
    <text evidence="6 10">Interacts with COPT1 and COPT2 (PubMed:20852017). Interacts with APX8 (PubMed:27185545).</text>
</comment>
<comment type="subcellular location">
    <subcellularLocation>
        <location evidence="6 7">Cell membrane</location>
        <topology evidence="6 7">Multi-pass membrane protein</topology>
    </subcellularLocation>
</comment>
<comment type="tissue specificity">
    <text evidence="2 3 4">Mostly expressed in panicles and anthers. Also detected in leaves (leaf collar, leaf auricle, leaf ligule), roots, sheaths, culms and culm nodes.</text>
</comment>
<comment type="developmental stage">
    <text evidence="2">Accumulates to high levels in pollen grains, tapetal cells, and middle-layer cells of the anther wall. Also detected at high levels in connective tissue cells and the connective vascular element at the unicellular- to-bicellular pollen grain stages. At the tricellular pollen grain stage, confined to the cells of connective vascular elements.</text>
</comment>
<comment type="induction">
    <text evidence="3 4 5 9">By the X.oryzae pv. oryzae (Xoo) transcription activator-like effector (TALe) protein pthXo1 and, possibly, AvrXa7.</text>
</comment>
<comment type="disruption phenotype">
    <text evidence="2 7">Reduced starch content in pollen and male sterility. Enhanced resistance against bacterial blight mediated by X.oryzae pv. oryzae (Xoo) strain PXO99(A).</text>
</comment>
<comment type="similarity">
    <text evidence="12">Belongs to the SWEET sugar transporter family.</text>
</comment>
<name>SWT11_ORYSJ</name>
<protein>
    <recommendedName>
        <fullName>Bidirectional sugar transporter SWEET11</fullName>
        <shortName>OsSWEET11</shortName>
    </recommendedName>
    <alternativeName>
        <fullName>Disease resistant allele Xa13</fullName>
    </alternativeName>
</protein>
<proteinExistence type="evidence at protein level"/>
<organism>
    <name type="scientific">Oryza sativa subsp. japonica</name>
    <name type="common">Rice</name>
    <dbReference type="NCBI Taxonomy" id="39947"/>
    <lineage>
        <taxon>Eukaryota</taxon>
        <taxon>Viridiplantae</taxon>
        <taxon>Streptophyta</taxon>
        <taxon>Embryophyta</taxon>
        <taxon>Tracheophyta</taxon>
        <taxon>Spermatophyta</taxon>
        <taxon>Magnoliopsida</taxon>
        <taxon>Liliopsida</taxon>
        <taxon>Poales</taxon>
        <taxon>Poaceae</taxon>
        <taxon>BOP clade</taxon>
        <taxon>Oryzoideae</taxon>
        <taxon>Oryzeae</taxon>
        <taxon>Oryzinae</taxon>
        <taxon>Oryza</taxon>
        <taxon>Oryza sativa</taxon>
    </lineage>
</organism>
<reference key="1">
    <citation type="submission" date="2011-10" db="EMBL/GenBank/DDBJ databases">
        <title>Structural and expression analysis of immature seed genes in Oryza sativa L.</title>
        <authorList>
            <person name="Yoon U.H."/>
        </authorList>
    </citation>
    <scope>NUCLEOTIDE SEQUENCE [MRNA]</scope>
    <source>
        <strain>cv. Ilpoombyeo</strain>
        <tissue>Immature seed</tissue>
    </source>
</reference>
<reference key="2">
    <citation type="journal article" date="2005" name="Nature">
        <title>The map-based sequence of the rice genome.</title>
        <authorList>
            <consortium name="International rice genome sequencing project (IRGSP)"/>
        </authorList>
    </citation>
    <scope>NUCLEOTIDE SEQUENCE [LARGE SCALE GENOMIC DNA]</scope>
    <source>
        <strain>cv. Nipponbare</strain>
    </source>
</reference>
<reference key="3">
    <citation type="journal article" date="2008" name="Nucleic Acids Res.">
        <title>The rice annotation project database (RAP-DB): 2008 update.</title>
        <authorList>
            <consortium name="The rice annotation project (RAP)"/>
        </authorList>
    </citation>
    <scope>GENOME REANNOTATION</scope>
    <source>
        <strain>cv. Nipponbare</strain>
    </source>
</reference>
<reference key="4">
    <citation type="journal article" date="2013" name="Rice">
        <title>Improvement of the Oryza sativa Nipponbare reference genome using next generation sequence and optical map data.</title>
        <authorList>
            <person name="Kawahara Y."/>
            <person name="de la Bastide M."/>
            <person name="Hamilton J.P."/>
            <person name="Kanamori H."/>
            <person name="McCombie W.R."/>
            <person name="Ouyang S."/>
            <person name="Schwartz D.C."/>
            <person name="Tanaka T."/>
            <person name="Wu J."/>
            <person name="Zhou S."/>
            <person name="Childs K.L."/>
            <person name="Davidson R.M."/>
            <person name="Lin H."/>
            <person name="Quesada-Ocampo L."/>
            <person name="Vaillancourt B."/>
            <person name="Sakai H."/>
            <person name="Lee S.S."/>
            <person name="Kim J."/>
            <person name="Numa H."/>
            <person name="Itoh T."/>
            <person name="Buell C.R."/>
            <person name="Matsumoto T."/>
        </authorList>
    </citation>
    <scope>GENOME REANNOTATION</scope>
    <source>
        <strain>cv. Nipponbare</strain>
    </source>
</reference>
<reference key="5">
    <citation type="journal article" date="2005" name="PLoS Biol.">
        <title>The genomes of Oryza sativa: a history of duplications.</title>
        <authorList>
            <person name="Yu J."/>
            <person name="Wang J."/>
            <person name="Lin W."/>
            <person name="Li S."/>
            <person name="Li H."/>
            <person name="Zhou J."/>
            <person name="Ni P."/>
            <person name="Dong W."/>
            <person name="Hu S."/>
            <person name="Zeng C."/>
            <person name="Zhang J."/>
            <person name="Zhang Y."/>
            <person name="Li R."/>
            <person name="Xu Z."/>
            <person name="Li S."/>
            <person name="Li X."/>
            <person name="Zheng H."/>
            <person name="Cong L."/>
            <person name="Lin L."/>
            <person name="Yin J."/>
            <person name="Geng J."/>
            <person name="Li G."/>
            <person name="Shi J."/>
            <person name="Liu J."/>
            <person name="Lv H."/>
            <person name="Li J."/>
            <person name="Wang J."/>
            <person name="Deng Y."/>
            <person name="Ran L."/>
            <person name="Shi X."/>
            <person name="Wang X."/>
            <person name="Wu Q."/>
            <person name="Li C."/>
            <person name="Ren X."/>
            <person name="Wang J."/>
            <person name="Wang X."/>
            <person name="Li D."/>
            <person name="Liu D."/>
            <person name="Zhang X."/>
            <person name="Ji Z."/>
            <person name="Zhao W."/>
            <person name="Sun Y."/>
            <person name="Zhang Z."/>
            <person name="Bao J."/>
            <person name="Han Y."/>
            <person name="Dong L."/>
            <person name="Ji J."/>
            <person name="Chen P."/>
            <person name="Wu S."/>
            <person name="Liu J."/>
            <person name="Xiao Y."/>
            <person name="Bu D."/>
            <person name="Tan J."/>
            <person name="Yang L."/>
            <person name="Ye C."/>
            <person name="Zhang J."/>
            <person name="Xu J."/>
            <person name="Zhou Y."/>
            <person name="Yu Y."/>
            <person name="Zhang B."/>
            <person name="Zhuang S."/>
            <person name="Wei H."/>
            <person name="Liu B."/>
            <person name="Lei M."/>
            <person name="Yu H."/>
            <person name="Li Y."/>
            <person name="Xu H."/>
            <person name="Wei S."/>
            <person name="He X."/>
            <person name="Fang L."/>
            <person name="Zhang Z."/>
            <person name="Zhang Y."/>
            <person name="Huang X."/>
            <person name="Su Z."/>
            <person name="Tong W."/>
            <person name="Li J."/>
            <person name="Tong Z."/>
            <person name="Li S."/>
            <person name="Ye J."/>
            <person name="Wang L."/>
            <person name="Fang L."/>
            <person name="Lei T."/>
            <person name="Chen C.-S."/>
            <person name="Chen H.-C."/>
            <person name="Xu Z."/>
            <person name="Li H."/>
            <person name="Huang H."/>
            <person name="Zhang F."/>
            <person name="Xu H."/>
            <person name="Li N."/>
            <person name="Zhao C."/>
            <person name="Li S."/>
            <person name="Dong L."/>
            <person name="Huang Y."/>
            <person name="Li L."/>
            <person name="Xi Y."/>
            <person name="Qi Q."/>
            <person name="Li W."/>
            <person name="Zhang B."/>
            <person name="Hu W."/>
            <person name="Zhang Y."/>
            <person name="Tian X."/>
            <person name="Jiao Y."/>
            <person name="Liang X."/>
            <person name="Jin J."/>
            <person name="Gao L."/>
            <person name="Zheng W."/>
            <person name="Hao B."/>
            <person name="Liu S.-M."/>
            <person name="Wang W."/>
            <person name="Yuan L."/>
            <person name="Cao M."/>
            <person name="McDermott J."/>
            <person name="Samudrala R."/>
            <person name="Wang J."/>
            <person name="Wong G.K.-S."/>
            <person name="Yang H."/>
        </authorList>
    </citation>
    <scope>NUCLEOTIDE SEQUENCE [LARGE SCALE GENOMIC DNA]</scope>
    <source>
        <strain>cv. Nipponbare</strain>
    </source>
</reference>
<reference key="6">
    <citation type="journal article" date="2003" name="Science">
        <title>Collection, mapping, and annotation of over 28,000 cDNA clones from japonica rice.</title>
        <authorList>
            <consortium name="The rice full-length cDNA consortium"/>
        </authorList>
    </citation>
    <scope>NUCLEOTIDE SEQUENCE [LARGE SCALE MRNA]</scope>
    <source>
        <strain>cv. Nipponbare</strain>
    </source>
</reference>
<reference key="7">
    <citation type="journal article" date="2006" name="Genes Dev.">
        <title>Promoter mutations of an essential gene for pollen development result in disease resistance in rice.</title>
        <authorList>
            <person name="Chu Z."/>
            <person name="Yuan M."/>
            <person name="Yao J."/>
            <person name="Ge X."/>
            <person name="Yuan B."/>
            <person name="Xu C."/>
            <person name="Li X."/>
            <person name="Fu B."/>
            <person name="Li Z."/>
            <person name="Bennetzen J.L."/>
            <person name="Zhang Q."/>
            <person name="Wang S."/>
        </authorList>
    </citation>
    <scope>FUNCTION</scope>
    <scope>DISRUPTION PHENOTYPE</scope>
    <scope>TISSUE SPECIFICITY</scope>
    <scope>DEVELOPMENTAL STAGE</scope>
    <source>
        <strain>cv. Indica / IR24</strain>
        <strain>cv. Indica / IRBB13</strain>
    </source>
</reference>
<reference key="8">
    <citation type="journal article" date="2006" name="Proc. Natl. Acad. Sci. U.S.A.">
        <title>Os8N3 is a host disease-susceptibility gene for bacterial blight of rice.</title>
        <authorList>
            <person name="Yang B."/>
            <person name="Sugio A."/>
            <person name="White F.F."/>
        </authorList>
    </citation>
    <scope>FUNCTION</scope>
    <scope>INDUCTION BY XANTHOMONAS ORYZAE</scope>
    <scope>TISSUE SPECIFICITY</scope>
    <source>
        <strain>cv. BJ1</strain>
        <strain>cv. Indica / IR24</strain>
        <strain>cv. Indica / IRBB13</strain>
        <strain>cv. Juma</strain>
        <strain>cv. Nipponbare</strain>
    </source>
</reference>
<reference key="9">
    <citation type="journal article" date="2009" name="Plant Cell Physiol.">
        <title>Pathogen-induced expressional loss of function is the key factor in race-specific bacterial resistance conferred by a recessive R gene xa13 in rice.</title>
        <authorList>
            <person name="Yuan M."/>
            <person name="Chu Z."/>
            <person name="Li X."/>
            <person name="Xu C."/>
            <person name="Wang S."/>
        </authorList>
    </citation>
    <scope>FUNCTION</scope>
    <scope>INDUCTION BY XANTHOMONAS ORYZAE</scope>
    <scope>TISSUE SPECIFICITY</scope>
</reference>
<reference key="10">
    <citation type="journal article" date="2010" name="Nature">
        <title>Sugar transporters for intercellular exchange and nutrition of pathogens.</title>
        <authorList>
            <person name="Chen L.-Q."/>
            <person name="Hou B.-H."/>
            <person name="Lalonde S."/>
            <person name="Takanaga H."/>
            <person name="Hartung M.L."/>
            <person name="Qu X.-Q."/>
            <person name="Guo W.-J."/>
            <person name="Kim J.-G."/>
            <person name="Underwood W."/>
            <person name="Chaudhuri B."/>
            <person name="Chermak D."/>
            <person name="Antony G."/>
            <person name="White F.F."/>
            <person name="Somerville S.C."/>
            <person name="Mudgett M.B."/>
            <person name="Frommer W.B."/>
        </authorList>
    </citation>
    <scope>FUNCTION</scope>
    <scope>DISRUPTION PHENOTYPE</scope>
    <scope>SUBCELLULAR LOCATION</scope>
    <scope>GENE FAMILY</scope>
    <scope>NOMENCLATURE</scope>
</reference>
<reference key="11">
    <citation type="journal article" date="2010" name="New Phytol.">
        <title>Promoter elements of rice susceptibility genes are bound and activated by specific TAL effectors from the bacterial blight pathogen, Xanthomonas oryzae pv. oryzae.</title>
        <authorList>
            <person name="Roemer P."/>
            <person name="Recht S."/>
            <person name="Strauss T."/>
            <person name="Elsaesser J."/>
            <person name="Schornack S."/>
            <person name="Boch J."/>
            <person name="Wang S."/>
            <person name="Lahaye T."/>
        </authorList>
    </citation>
    <scope>INDUCTION BY PTHXO1</scope>
    <source>
        <strain>cv. Indica / IR24</strain>
        <strain>cv. Indica / IRBB13</strain>
    </source>
</reference>
<reference key="12">
    <citation type="journal article" date="2010" name="Plant Cell">
        <title>Rice xa13 recessive resistance to bacterial blight is defeated by induction of the disease susceptibility gene Os-11N3. The bacterial pathogen Xanthomonas oryzae overcomes rice defenses by regulating host copper redistribution.</title>
        <authorList>
            <person name="Antony G."/>
            <person name="Zhou J."/>
            <person name="Huang S."/>
            <person name="Li T."/>
            <person name="Liu B."/>
            <person name="White F."/>
            <person name="Yang B."/>
            <person name="Yuan M."/>
            <person name="Chu Z."/>
            <person name="Li X."/>
            <person name="Xu C."/>
            <person name="Wang S."/>
        </authorList>
    </citation>
    <scope>FUNCTION</scope>
    <scope>INTERACTION WITH COPT1 AND COPT2</scope>
    <scope>SUBCELLULAR LOCATION</scope>
</reference>
<reference key="13">
    <citation type="journal article" date="2012" name="Mol. Plant">
        <title>SWEET as sugar: new sucrose effluxers in plants.</title>
        <authorList>
            <person name="Baker R.F."/>
            <person name="Leach K.A."/>
            <person name="Braun D.M."/>
        </authorList>
    </citation>
    <scope>REVIEW</scope>
</reference>
<reference key="14">
    <citation type="journal article" date="2012" name="Science">
        <title>Sucrose efflux mediated by SWEET proteins as a key step for phloem transport.</title>
        <authorList>
            <person name="Chen L.-Q."/>
            <person name="Qu X.-Q."/>
            <person name="Hou B.-H."/>
            <person name="Sosso D."/>
            <person name="Osorio S."/>
            <person name="Fernie A.R."/>
            <person name="Frommer W.B."/>
        </authorList>
    </citation>
    <scope>FUNCTION</scope>
</reference>
<reference key="15">
    <citation type="journal article" date="2013" name="New Phytol.">
        <title>Five phylogenetically close rice SWEET genes confer TAL effector-mediated susceptibility to Xanthomonas oryzae pv. oryzae.</title>
        <authorList>
            <person name="Streubel J."/>
            <person name="Pesce C."/>
            <person name="Hutin M."/>
            <person name="Koebnik R."/>
            <person name="Boch J."/>
            <person name="Szurek B."/>
        </authorList>
    </citation>
    <scope>FUNCTION</scope>
    <scope>INDUCTION BY TAL PROTEINS</scope>
    <source>
        <strain>cv. Nipponbare</strain>
    </source>
</reference>
<reference key="16">
    <citation type="journal article" date="2015" name="Curr. Opin. Plant Biol.">
        <title>SWEETs, transporters for intracellular and intercellular sugar translocation.</title>
        <authorList>
            <person name="Eom J.-S."/>
            <person name="Chen L.-Q."/>
            <person name="Sosso D."/>
            <person name="Julius B.T."/>
            <person name="Lin I.W."/>
            <person name="Qu X.-Q."/>
            <person name="Braun D.M."/>
            <person name="Frommer W.B."/>
        </authorList>
    </citation>
    <scope>REVIEW</scope>
</reference>
<reference key="17">
    <citation type="journal article" date="2016" name="Sci. Rep.">
        <title>The rice thylakoid membrane-bound ascorbate peroxidase OsAPX8 functions in tolerance to bacterial blight.</title>
        <authorList>
            <person name="Jiang G."/>
            <person name="Yin D."/>
            <person name="Zhao J."/>
            <person name="Chen H."/>
            <person name="Guo L."/>
            <person name="Zhu L."/>
            <person name="Zhai W."/>
        </authorList>
    </citation>
    <scope>INTERACTION WITH APX8</scope>
    <source>
        <strain>cv. Taipei 309</strain>
    </source>
</reference>
<evidence type="ECO:0000255" key="1"/>
<evidence type="ECO:0000269" key="2">
    <source>
    </source>
</evidence>
<evidence type="ECO:0000269" key="3">
    <source>
    </source>
</evidence>
<evidence type="ECO:0000269" key="4">
    <source>
    </source>
</evidence>
<evidence type="ECO:0000269" key="5">
    <source>
    </source>
</evidence>
<evidence type="ECO:0000269" key="6">
    <source>
    </source>
</evidence>
<evidence type="ECO:0000269" key="7">
    <source>
    </source>
</evidence>
<evidence type="ECO:0000269" key="8">
    <source>
    </source>
</evidence>
<evidence type="ECO:0000269" key="9">
    <source>
    </source>
</evidence>
<evidence type="ECO:0000269" key="10">
    <source>
    </source>
</evidence>
<evidence type="ECO:0000303" key="11">
    <source>
    </source>
</evidence>
<evidence type="ECO:0000305" key="12"/>
<feature type="chain" id="PRO_0000404133" description="Bidirectional sugar transporter SWEET11">
    <location>
        <begin position="1"/>
        <end position="307"/>
    </location>
</feature>
<feature type="topological domain" description="Extracellular" evidence="1">
    <location>
        <begin position="1"/>
        <end position="14"/>
    </location>
</feature>
<feature type="transmembrane region" description="Helical; Name=1" evidence="1">
    <location>
        <begin position="15"/>
        <end position="35"/>
    </location>
</feature>
<feature type="topological domain" description="Cytoplasmic" evidence="1">
    <location>
        <begin position="36"/>
        <end position="47"/>
    </location>
</feature>
<feature type="transmembrane region" description="Helical; Name=2" evidence="1">
    <location>
        <begin position="48"/>
        <end position="68"/>
    </location>
</feature>
<feature type="topological domain" description="Extracellular" evidence="1">
    <location>
        <begin position="69"/>
        <end position="74"/>
    </location>
</feature>
<feature type="transmembrane region" description="Helical; Name=3" evidence="1">
    <location>
        <begin position="75"/>
        <end position="95"/>
    </location>
</feature>
<feature type="topological domain" description="Cytoplasmic" evidence="1">
    <location>
        <begin position="96"/>
        <end position="107"/>
    </location>
</feature>
<feature type="transmembrane region" description="Helical; Name=4" evidence="1">
    <location>
        <begin position="108"/>
        <end position="128"/>
    </location>
</feature>
<feature type="topological domain" description="Extracellular" evidence="1">
    <location>
        <begin position="129"/>
        <end position="135"/>
    </location>
</feature>
<feature type="transmembrane region" description="Helical; Name=5" evidence="1">
    <location>
        <begin position="136"/>
        <end position="156"/>
    </location>
</feature>
<feature type="topological domain" description="Cytoplasmic" evidence="1">
    <location>
        <begin position="157"/>
        <end position="168"/>
    </location>
</feature>
<feature type="transmembrane region" description="Helical; Name=6" evidence="1">
    <location>
        <begin position="169"/>
        <end position="189"/>
    </location>
</feature>
<feature type="topological domain" description="Extracellular" evidence="1">
    <location>
        <begin position="190"/>
        <end position="194"/>
    </location>
</feature>
<feature type="transmembrane region" description="Helical; Name=7" evidence="1">
    <location>
        <begin position="195"/>
        <end position="215"/>
    </location>
</feature>
<feature type="topological domain" description="Cytoplasmic" evidence="1">
    <location>
        <begin position="216"/>
        <end position="307"/>
    </location>
</feature>
<feature type="domain" description="MtN3/slv 1">
    <location>
        <begin position="17"/>
        <end position="100"/>
    </location>
</feature>
<feature type="domain" description="MtN3/slv 2">
    <location>
        <begin position="136"/>
        <end position="219"/>
    </location>
</feature>
<keyword id="KW-1003">Cell membrane</keyword>
<keyword id="KW-0472">Membrane</keyword>
<keyword id="KW-0611">Plant defense</keyword>
<keyword id="KW-1185">Reference proteome</keyword>
<keyword id="KW-0677">Repeat</keyword>
<keyword id="KW-0762">Sugar transport</keyword>
<keyword id="KW-0812">Transmembrane</keyword>
<keyword id="KW-1133">Transmembrane helix</keyword>
<keyword id="KW-0813">Transport</keyword>
<sequence>MAGGFLSMANPAVTLSGVAGNIISFLVFLAPVATFLQVYKKKSTGGYSSVPYVVALFSSVLWIFYALVKTNSRPLLTINAFGCGVEAAYIVLYLVYAPRRARLRTLAFFLLLDVAAFALIVVTTLYLVPKPHQVKFLGSVCLAFSMAVFVAPLSIIFKVIKTKSVEFMPIGLSVCLTLSAVAWFCYGLFTKDPYVMYPNVGGFFFSCVQMGLYFWYRKPRNTAVLPTTSDSMSPISAAAAATQRVIELPAGTHAFTILSVSPIPILGVHKVEVVAAEQAADGVAAAAAADKELLQNKPEVIEITAAV</sequence>
<accession>Q6YZF3</accession>
<accession>A0A0P0XIY5</accession>
<accession>K4FDI0</accession>
<gene>
    <name type="primary">SWEET11</name>
    <name type="synonym">Os8N3</name>
    <name type="synonym">XA13</name>
    <name type="ordered locus">Os08g0535200</name>
    <name type="ordered locus">LOC_Os08g42350</name>
    <name type="ORF">OsJ_28080</name>
    <name type="ORF">OSJNBa0033D24.17</name>
    <name type="ORF">P0702C09.32</name>
</gene>
<dbReference type="EMBL" id="JN944367">
    <property type="protein sequence ID" value="AFI71278.1"/>
    <property type="molecule type" value="mRNA"/>
</dbReference>
<dbReference type="EMBL" id="AP005439">
    <property type="protein sequence ID" value="BAD13102.1"/>
    <property type="molecule type" value="Genomic_DNA"/>
</dbReference>
<dbReference type="EMBL" id="AP005528">
    <property type="protein sequence ID" value="BAD13168.1"/>
    <property type="molecule type" value="Genomic_DNA"/>
</dbReference>
<dbReference type="EMBL" id="AP008214">
    <property type="protein sequence ID" value="BAF24268.1"/>
    <property type="molecule type" value="Genomic_DNA"/>
</dbReference>
<dbReference type="EMBL" id="AP014964">
    <property type="protein sequence ID" value="BAT06435.1"/>
    <property type="molecule type" value="Genomic_DNA"/>
</dbReference>
<dbReference type="EMBL" id="CM000145">
    <property type="protein sequence ID" value="EEE69066.1"/>
    <property type="molecule type" value="Genomic_DNA"/>
</dbReference>
<dbReference type="EMBL" id="AK106127">
    <property type="protein sequence ID" value="BAG97588.1"/>
    <property type="molecule type" value="mRNA"/>
</dbReference>
<dbReference type="RefSeq" id="XP_015648423.1">
    <property type="nucleotide sequence ID" value="XM_015792937.1"/>
</dbReference>
<dbReference type="SMR" id="Q6YZF3"/>
<dbReference type="FunCoup" id="Q6YZF3">
    <property type="interactions" value="215"/>
</dbReference>
<dbReference type="STRING" id="39947.Q6YZF3"/>
<dbReference type="TCDB" id="2.A.123.1.6">
    <property type="family name" value="the sweet, pq-loop, saliva, mtn3 (sweet) family"/>
</dbReference>
<dbReference type="PaxDb" id="39947-Q6YZF3"/>
<dbReference type="EnsemblPlants" id="Os08t0535200-01">
    <property type="protein sequence ID" value="Os08t0535200-01"/>
    <property type="gene ID" value="Os08g0535200"/>
</dbReference>
<dbReference type="Gramene" id="Os08t0535200-01">
    <property type="protein sequence ID" value="Os08t0535200-01"/>
    <property type="gene ID" value="Os08g0535200"/>
</dbReference>
<dbReference type="KEGG" id="dosa:Os08g0535200"/>
<dbReference type="eggNOG" id="KOG1623">
    <property type="taxonomic scope" value="Eukaryota"/>
</dbReference>
<dbReference type="HOGENOM" id="CLU_048643_4_0_1"/>
<dbReference type="InParanoid" id="Q6YZF3"/>
<dbReference type="OMA" id="TRACMIR"/>
<dbReference type="OrthoDB" id="409725at2759"/>
<dbReference type="Proteomes" id="UP000000763">
    <property type="component" value="Chromosome 8"/>
</dbReference>
<dbReference type="Proteomes" id="UP000007752">
    <property type="component" value="Chromosome 8"/>
</dbReference>
<dbReference type="Proteomes" id="UP000059680">
    <property type="component" value="Chromosome 8"/>
</dbReference>
<dbReference type="GO" id="GO:0016020">
    <property type="term" value="C:membrane"/>
    <property type="evidence" value="ECO:0000318"/>
    <property type="project" value="GO_Central"/>
</dbReference>
<dbReference type="GO" id="GO:0005886">
    <property type="term" value="C:plasma membrane"/>
    <property type="evidence" value="ECO:0000314"/>
    <property type="project" value="UniProtKB"/>
</dbReference>
<dbReference type="GO" id="GO:0008515">
    <property type="term" value="F:sucrose transmembrane transporter activity"/>
    <property type="evidence" value="ECO:0000314"/>
    <property type="project" value="UniProtKB"/>
</dbReference>
<dbReference type="GO" id="GO:0051119">
    <property type="term" value="F:sugar transmembrane transporter activity"/>
    <property type="evidence" value="ECO:0000250"/>
    <property type="project" value="UniProtKB"/>
</dbReference>
<dbReference type="GO" id="GO:0008643">
    <property type="term" value="P:carbohydrate transport"/>
    <property type="evidence" value="ECO:0000318"/>
    <property type="project" value="GO_Central"/>
</dbReference>
<dbReference type="GO" id="GO:0006825">
    <property type="term" value="P:copper ion transport"/>
    <property type="evidence" value="ECO:0000315"/>
    <property type="project" value="UniProtKB"/>
</dbReference>
<dbReference type="GO" id="GO:0006952">
    <property type="term" value="P:defense response"/>
    <property type="evidence" value="ECO:0007669"/>
    <property type="project" value="UniProtKB-KW"/>
</dbReference>
<dbReference type="GO" id="GO:0015770">
    <property type="term" value="P:sucrose transport"/>
    <property type="evidence" value="ECO:0000314"/>
    <property type="project" value="UniProtKB"/>
</dbReference>
<dbReference type="FunFam" id="1.20.1280.290:FF:000001">
    <property type="entry name" value="Bidirectional sugar transporter SWEET"/>
    <property type="match status" value="1"/>
</dbReference>
<dbReference type="FunFam" id="1.20.1280.290:FF:000020">
    <property type="entry name" value="Bidirectional sugar transporter SWEET"/>
    <property type="match status" value="1"/>
</dbReference>
<dbReference type="Gene3D" id="1.20.1280.290">
    <property type="match status" value="2"/>
</dbReference>
<dbReference type="InterPro" id="IPR047664">
    <property type="entry name" value="SWEET"/>
</dbReference>
<dbReference type="InterPro" id="IPR004316">
    <property type="entry name" value="SWEET_rpt"/>
</dbReference>
<dbReference type="PANTHER" id="PTHR10791:SF196">
    <property type="entry name" value="BIDIRECTIONAL SUGAR TRANSPORTER SWEET11"/>
    <property type="match status" value="1"/>
</dbReference>
<dbReference type="PANTHER" id="PTHR10791">
    <property type="entry name" value="RAG1-ACTIVATING PROTEIN 1"/>
    <property type="match status" value="1"/>
</dbReference>
<dbReference type="Pfam" id="PF03083">
    <property type="entry name" value="MtN3_slv"/>
    <property type="match status" value="2"/>
</dbReference>